<comment type="function">
    <text evidence="1 3 4">Protein involved in mitophagy by facilitating recruitment of the autophagy machinery required for clearance of damaged mitochondria (PubMed:30982665). Accumulates on the mitochondria surface in response to mitochondrial depolarization and acts as a 'eat me' signal by recruiting proteins involved in selective autophagy, such as autophagy receptors (CALCOCO2/NDP52, NBR1, SQSTM1/p62, TAX1BP1 and WDFY3/ALFY) and ATG8 family proteins (MAP1LC3A, MAP1LC3B, MAP1LC3C, GABARAP, GABARAPL1 and GABARAPL2) (By similarity). May act as a positive regulator of L-type calcium channels (PubMed:22627147).</text>
</comment>
<comment type="subunit">
    <text evidence="1">Interacts with CALCOCO2/NDP52, NBR1, SQSTM1/p62, TAX1BP1 and WDFY3/ALFY (By similarity). Interacts with ATG8 family proteins (MAP1LC3A, MAP1LC3B, MAP1LC3C, GABARAP, GABARAPL1 and GABARAPL2) (By similarity). Interacts with VDAC1 (By similarity).</text>
</comment>
<comment type="subcellular location">
    <subcellularLocation>
        <location evidence="1">Mitochondrion matrix</location>
    </subcellularLocation>
    <subcellularLocation>
        <location evidence="7">Cytoplasm</location>
    </subcellularLocation>
</comment>
<comment type="similarity">
    <text evidence="6">Belongs to the NipSnap family.</text>
</comment>
<reference key="1">
    <citation type="journal article" date="1998" name="Gene">
        <title>Characterization of the human NIPSNAP1 gene from 22q12: a member of a novel gene family.</title>
        <authorList>
            <person name="Seroussi E."/>
            <person name="Pan H.Q."/>
            <person name="Kedra D."/>
            <person name="Roe B.A."/>
            <person name="Dumanski J.P."/>
        </authorList>
    </citation>
    <scope>NUCLEOTIDE SEQUENCE [MRNA]</scope>
</reference>
<reference key="2">
    <citation type="journal article" date="2010" name="Cell">
        <title>A tissue-specific atlas of mouse protein phosphorylation and expression.</title>
        <authorList>
            <person name="Huttlin E.L."/>
            <person name="Jedrychowski M.P."/>
            <person name="Elias J.E."/>
            <person name="Goswami T."/>
            <person name="Rad R."/>
            <person name="Beausoleil S.A."/>
            <person name="Villen J."/>
            <person name="Haas W."/>
            <person name="Sowa M.E."/>
            <person name="Gygi S.P."/>
        </authorList>
    </citation>
    <scope>IDENTIFICATION BY MASS SPECTROMETRY [LARGE SCALE ANALYSIS]</scope>
    <source>
        <tissue>Brain</tissue>
        <tissue>Brown adipose tissue</tissue>
        <tissue>Heart</tissue>
        <tissue>Kidney</tissue>
        <tissue>Lung</tissue>
        <tissue>Pancreas</tissue>
        <tissue>Spleen</tissue>
        <tissue>Testis</tissue>
    </source>
</reference>
<reference key="3">
    <citation type="journal article" date="2012" name="Channels">
        <title>Regulation of CREB signaling through L-type Ca2+ channels by Nipsnap-2.</title>
        <authorList>
            <person name="Brittain J.M."/>
            <person name="Wang Y."/>
            <person name="Wilson S.M."/>
            <person name="Khanna R."/>
        </authorList>
    </citation>
    <scope>FUNCTION</scope>
    <scope>SUBCELLULAR LOCATION</scope>
</reference>
<reference key="4">
    <citation type="journal article" date="2019" name="Dev. Cell">
        <title>NIPSNAP1 and NIPSNAP2 act as 'eat me' signals for mitophagy.</title>
        <authorList>
            <person name="Princely Abudu Y."/>
            <person name="Pankiv S."/>
            <person name="Mathai B.J."/>
            <person name="Haakon Lystad A."/>
            <person name="Bindesboell C."/>
            <person name="Brenne H.B."/>
            <person name="Yoke Wui Ng M."/>
            <person name="Thiede B."/>
            <person name="Yamamoto A."/>
            <person name="Mutugi Nthiga T."/>
            <person name="Lamark T."/>
            <person name="Esguerra C.V."/>
            <person name="Johansen T."/>
            <person name="Simonsen A."/>
        </authorList>
    </citation>
    <scope>FUNCTION</scope>
</reference>
<dbReference type="EMBL" id="AJ001261">
    <property type="protein sequence ID" value="CAA04635.1"/>
    <property type="molecule type" value="mRNA"/>
</dbReference>
<dbReference type="CCDS" id="CCDS19698.1"/>
<dbReference type="SMR" id="O55126"/>
<dbReference type="FunCoup" id="O55126">
    <property type="interactions" value="2101"/>
</dbReference>
<dbReference type="IntAct" id="O55126">
    <property type="interactions" value="2"/>
</dbReference>
<dbReference type="MINT" id="O55126"/>
<dbReference type="STRING" id="10090.ENSMUSP00000083211"/>
<dbReference type="GlyGen" id="O55126">
    <property type="glycosylation" value="1 site, 1 O-linked glycan (1 site)"/>
</dbReference>
<dbReference type="iPTMnet" id="O55126"/>
<dbReference type="PhosphoSitePlus" id="O55126"/>
<dbReference type="SwissPalm" id="O55126"/>
<dbReference type="jPOST" id="O55126"/>
<dbReference type="PaxDb" id="10090-ENSMUSP00000083211"/>
<dbReference type="PeptideAtlas" id="O55126"/>
<dbReference type="ProteomicsDB" id="253075"/>
<dbReference type="Pumba" id="O55126"/>
<dbReference type="AGR" id="MGI:1278343"/>
<dbReference type="MGI" id="MGI:1278343">
    <property type="gene designation" value="Nipsnap2"/>
</dbReference>
<dbReference type="eggNOG" id="KOG2883">
    <property type="taxonomic scope" value="Eukaryota"/>
</dbReference>
<dbReference type="InParanoid" id="O55126"/>
<dbReference type="PhylomeDB" id="O55126"/>
<dbReference type="Reactome" id="R-MMU-9013407">
    <property type="pathway name" value="RHOH GTPase cycle"/>
</dbReference>
<dbReference type="CD-CODE" id="CE726F99">
    <property type="entry name" value="Postsynaptic density"/>
</dbReference>
<dbReference type="ChiTaRS" id="Gbas">
    <property type="organism name" value="mouse"/>
</dbReference>
<dbReference type="PRO" id="PR:O55126"/>
<dbReference type="Proteomes" id="UP000000589">
    <property type="component" value="Unplaced"/>
</dbReference>
<dbReference type="RNAct" id="O55126">
    <property type="molecule type" value="protein"/>
</dbReference>
<dbReference type="GO" id="GO:0005737">
    <property type="term" value="C:cytoplasm"/>
    <property type="evidence" value="ECO:0000314"/>
    <property type="project" value="UniProtKB"/>
</dbReference>
<dbReference type="GO" id="GO:0005759">
    <property type="term" value="C:mitochondrial matrix"/>
    <property type="evidence" value="ECO:0000250"/>
    <property type="project" value="UniProtKB"/>
</dbReference>
<dbReference type="GO" id="GO:0005741">
    <property type="term" value="C:mitochondrial outer membrane"/>
    <property type="evidence" value="ECO:0000250"/>
    <property type="project" value="UniProtKB"/>
</dbReference>
<dbReference type="GO" id="GO:0005739">
    <property type="term" value="C:mitochondrion"/>
    <property type="evidence" value="ECO:0007005"/>
    <property type="project" value="MGI"/>
</dbReference>
<dbReference type="GO" id="GO:0030674">
    <property type="term" value="F:protein-macromolecule adaptor activity"/>
    <property type="evidence" value="ECO:0000250"/>
    <property type="project" value="UniProtKB"/>
</dbReference>
<dbReference type="GO" id="GO:0000423">
    <property type="term" value="P:mitophagy"/>
    <property type="evidence" value="ECO:0000314"/>
    <property type="project" value="UniProtKB"/>
</dbReference>
<dbReference type="GO" id="GO:1901843">
    <property type="term" value="P:positive regulation of high voltage-gated calcium channel activity"/>
    <property type="evidence" value="ECO:0000315"/>
    <property type="project" value="UniProtKB"/>
</dbReference>
<dbReference type="FunFam" id="3.30.70.100:FF:000003">
    <property type="entry name" value="Protein NipSnap homolog 2"/>
    <property type="match status" value="1"/>
</dbReference>
<dbReference type="FunFam" id="3.30.70.100:FF:000007">
    <property type="entry name" value="protein NipSnap homolog 2"/>
    <property type="match status" value="1"/>
</dbReference>
<dbReference type="Gene3D" id="3.30.70.100">
    <property type="match status" value="2"/>
</dbReference>
<dbReference type="InterPro" id="IPR011008">
    <property type="entry name" value="Dimeric_a/b-barrel"/>
</dbReference>
<dbReference type="InterPro" id="IPR012577">
    <property type="entry name" value="NIPSNAP"/>
</dbReference>
<dbReference type="InterPro" id="IPR051557">
    <property type="entry name" value="NipSnap_domain"/>
</dbReference>
<dbReference type="PANTHER" id="PTHR21017">
    <property type="entry name" value="NIPSNAP-RELATED"/>
    <property type="match status" value="1"/>
</dbReference>
<dbReference type="PANTHER" id="PTHR21017:SF14">
    <property type="entry name" value="PROTEIN NIPSNAP HOMOLOG 2"/>
    <property type="match status" value="1"/>
</dbReference>
<dbReference type="Pfam" id="PF07978">
    <property type="entry name" value="NIPSNAP"/>
    <property type="match status" value="1"/>
</dbReference>
<dbReference type="SUPFAM" id="SSF54909">
    <property type="entry name" value="Dimeric alpha+beta barrel"/>
    <property type="match status" value="2"/>
</dbReference>
<gene>
    <name evidence="5 8" type="primary">Nipsnap2</name>
    <name type="synonym">Gbas</name>
</gene>
<protein>
    <recommendedName>
        <fullName>Protein NipSnap homolog 2</fullName>
        <shortName>NipSnap2</shortName>
    </recommendedName>
    <alternativeName>
        <fullName>Glioblastoma-amplified sequence</fullName>
    </alternativeName>
</protein>
<proteinExistence type="evidence at protein level"/>
<organism>
    <name type="scientific">Mus musculus</name>
    <name type="common">Mouse</name>
    <dbReference type="NCBI Taxonomy" id="10090"/>
    <lineage>
        <taxon>Eukaryota</taxon>
        <taxon>Metazoa</taxon>
        <taxon>Chordata</taxon>
        <taxon>Craniata</taxon>
        <taxon>Vertebrata</taxon>
        <taxon>Euteleostomi</taxon>
        <taxon>Mammalia</taxon>
        <taxon>Eutheria</taxon>
        <taxon>Euarchontoglires</taxon>
        <taxon>Glires</taxon>
        <taxon>Rodentia</taxon>
        <taxon>Myomorpha</taxon>
        <taxon>Muroidea</taxon>
        <taxon>Muridae</taxon>
        <taxon>Murinae</taxon>
        <taxon>Mus</taxon>
        <taxon>Mus</taxon>
    </lineage>
</organism>
<feature type="transit peptide" description="Mitochondrion" evidence="2">
    <location>
        <begin position="1"/>
        <end position="27"/>
    </location>
</feature>
<feature type="chain" id="PRO_0000221149" description="Protein NipSnap homolog 2" evidence="2">
    <location>
        <begin position="28"/>
        <end position="281"/>
    </location>
</feature>
<sequence>MAARVLLARGGLLRPAAQSAFLPGLRTVTSSSHRAREDSWLKSLFVRKVDPRKDAHSNLLAKKETSSLYKLQFHNVKPECLDAYNKICQEVLPKIHEGKQYPCTLVGTWNTWYGEQDQAVHLWRYEGGYPALTEVMNKLKENQEFVNFRKARSDMLLSRKNQLLLEFSFWNEPVPRPGPNIYELRSYQLRPGTMIEWGNYWARAIRFRQDSNEAIGGFFSQIGQLYMVDHLWAYRDLQTREDIRNAAWHKHGWEELVYYTVPLIQEMESRIMIPLKTSPLQ</sequence>
<name>NIPS2_MOUSE</name>
<keyword id="KW-0072">Autophagy</keyword>
<keyword id="KW-0963">Cytoplasm</keyword>
<keyword id="KW-0496">Mitochondrion</keyword>
<keyword id="KW-1185">Reference proteome</keyword>
<keyword id="KW-0809">Transit peptide</keyword>
<evidence type="ECO:0000250" key="1">
    <source>
        <dbReference type="UniProtKB" id="O75323"/>
    </source>
</evidence>
<evidence type="ECO:0000255" key="2"/>
<evidence type="ECO:0000269" key="3">
    <source>
    </source>
</evidence>
<evidence type="ECO:0000269" key="4">
    <source>
    </source>
</evidence>
<evidence type="ECO:0000303" key="5">
    <source>
    </source>
</evidence>
<evidence type="ECO:0000305" key="6"/>
<evidence type="ECO:0000305" key="7">
    <source>
    </source>
</evidence>
<evidence type="ECO:0000312" key="8">
    <source>
        <dbReference type="MGI" id="MGI:1278343"/>
    </source>
</evidence>
<accession>O55126</accession>